<accession>Q04PH9</accession>
<gene>
    <name evidence="1" type="primary">gatB</name>
    <name type="ordered locus">LBJ_2784</name>
</gene>
<evidence type="ECO:0000255" key="1">
    <source>
        <dbReference type="HAMAP-Rule" id="MF_00121"/>
    </source>
</evidence>
<comment type="function">
    <text evidence="1">Allows the formation of correctly charged Asn-tRNA(Asn) or Gln-tRNA(Gln) through the transamidation of misacylated Asp-tRNA(Asn) or Glu-tRNA(Gln) in organisms which lack either or both of asparaginyl-tRNA or glutaminyl-tRNA synthetases. The reaction takes place in the presence of glutamine and ATP through an activated phospho-Asp-tRNA(Asn) or phospho-Glu-tRNA(Gln).</text>
</comment>
<comment type="catalytic activity">
    <reaction evidence="1">
        <text>L-glutamyl-tRNA(Gln) + L-glutamine + ATP + H2O = L-glutaminyl-tRNA(Gln) + L-glutamate + ADP + phosphate + H(+)</text>
        <dbReference type="Rhea" id="RHEA:17521"/>
        <dbReference type="Rhea" id="RHEA-COMP:9681"/>
        <dbReference type="Rhea" id="RHEA-COMP:9684"/>
        <dbReference type="ChEBI" id="CHEBI:15377"/>
        <dbReference type="ChEBI" id="CHEBI:15378"/>
        <dbReference type="ChEBI" id="CHEBI:29985"/>
        <dbReference type="ChEBI" id="CHEBI:30616"/>
        <dbReference type="ChEBI" id="CHEBI:43474"/>
        <dbReference type="ChEBI" id="CHEBI:58359"/>
        <dbReference type="ChEBI" id="CHEBI:78520"/>
        <dbReference type="ChEBI" id="CHEBI:78521"/>
        <dbReference type="ChEBI" id="CHEBI:456216"/>
    </reaction>
</comment>
<comment type="catalytic activity">
    <reaction evidence="1">
        <text>L-aspartyl-tRNA(Asn) + L-glutamine + ATP + H2O = L-asparaginyl-tRNA(Asn) + L-glutamate + ADP + phosphate + 2 H(+)</text>
        <dbReference type="Rhea" id="RHEA:14513"/>
        <dbReference type="Rhea" id="RHEA-COMP:9674"/>
        <dbReference type="Rhea" id="RHEA-COMP:9677"/>
        <dbReference type="ChEBI" id="CHEBI:15377"/>
        <dbReference type="ChEBI" id="CHEBI:15378"/>
        <dbReference type="ChEBI" id="CHEBI:29985"/>
        <dbReference type="ChEBI" id="CHEBI:30616"/>
        <dbReference type="ChEBI" id="CHEBI:43474"/>
        <dbReference type="ChEBI" id="CHEBI:58359"/>
        <dbReference type="ChEBI" id="CHEBI:78515"/>
        <dbReference type="ChEBI" id="CHEBI:78516"/>
        <dbReference type="ChEBI" id="CHEBI:456216"/>
    </reaction>
</comment>
<comment type="subunit">
    <text evidence="1">Heterotrimer of A, B and C subunits.</text>
</comment>
<comment type="similarity">
    <text evidence="1">Belongs to the GatB/GatE family. GatB subfamily.</text>
</comment>
<sequence length="486" mass="54150">MAEFETIIGLEVHAQLNTESKIFSTSATKFGSPPNSQTNPVCLGLPGALPVLNESALEKAIMAGIAFGCDISLFTKFDRKNYFYPDLPKGYQISQFDKPICTGGGVTFTIKGEESSRYVRLTRIHMEEDAGKLIHSADPNIPQSYVDLNRAGTPLIEIVSEPDMRSSDEAYYYLNSLKSILKYIRVSDCNMEEGSLRCDANVSIRPKGSDKFGTRVEIKNLNSFKAVKAAIDYEVKWQTEMALEGKTFQQQTKLWDSVANKTVTMRTKEMSHDYRYFPDPDLPVIILQKETVESVRSKLPELPNERKNRFVEKLGLPKYDAEVLTAEREIADYFEDALKISGDAKKTSNWVKDEVLGVVNKESITISEFSVSAQRIGGLVKLIADGKISGKIAKTVFEELLISDKDAETIVTEKNLIVVRDDKEIERIVNEAIANNQDAVAKYKSGKDRALGAIVGYVMKVSKGKADPELVNQMLLDKLGSLPPKE</sequence>
<feature type="chain" id="PRO_1000015986" description="Aspartyl/glutamyl-tRNA(Asn/Gln) amidotransferase subunit B">
    <location>
        <begin position="1"/>
        <end position="486"/>
    </location>
</feature>
<dbReference type="EC" id="6.3.5.-" evidence="1"/>
<dbReference type="EMBL" id="CP000350">
    <property type="protein sequence ID" value="ABJ77191.1"/>
    <property type="molecule type" value="Genomic_DNA"/>
</dbReference>
<dbReference type="RefSeq" id="WP_011672082.1">
    <property type="nucleotide sequence ID" value="NC_008510.1"/>
</dbReference>
<dbReference type="SMR" id="Q04PH9"/>
<dbReference type="KEGG" id="lbj:LBJ_2784"/>
<dbReference type="HOGENOM" id="CLU_019240_0_0_12"/>
<dbReference type="Proteomes" id="UP000000656">
    <property type="component" value="Chromosome 1"/>
</dbReference>
<dbReference type="GO" id="GO:0050566">
    <property type="term" value="F:asparaginyl-tRNA synthase (glutamine-hydrolyzing) activity"/>
    <property type="evidence" value="ECO:0007669"/>
    <property type="project" value="RHEA"/>
</dbReference>
<dbReference type="GO" id="GO:0005524">
    <property type="term" value="F:ATP binding"/>
    <property type="evidence" value="ECO:0007669"/>
    <property type="project" value="UniProtKB-KW"/>
</dbReference>
<dbReference type="GO" id="GO:0050567">
    <property type="term" value="F:glutaminyl-tRNA synthase (glutamine-hydrolyzing) activity"/>
    <property type="evidence" value="ECO:0007669"/>
    <property type="project" value="UniProtKB-UniRule"/>
</dbReference>
<dbReference type="GO" id="GO:0070681">
    <property type="term" value="P:glutaminyl-tRNAGln biosynthesis via transamidation"/>
    <property type="evidence" value="ECO:0007669"/>
    <property type="project" value="TreeGrafter"/>
</dbReference>
<dbReference type="GO" id="GO:0006412">
    <property type="term" value="P:translation"/>
    <property type="evidence" value="ECO:0007669"/>
    <property type="project" value="UniProtKB-UniRule"/>
</dbReference>
<dbReference type="FunFam" id="1.10.10.410:FF:000001">
    <property type="entry name" value="Aspartyl/glutamyl-tRNA(Asn/Gln) amidotransferase subunit B"/>
    <property type="match status" value="1"/>
</dbReference>
<dbReference type="FunFam" id="1.10.150.380:FF:000003">
    <property type="entry name" value="Aspartyl/glutamyl-tRNA(Asn/Gln) amidotransferase subunit B"/>
    <property type="match status" value="1"/>
</dbReference>
<dbReference type="Gene3D" id="1.10.10.410">
    <property type="match status" value="1"/>
</dbReference>
<dbReference type="Gene3D" id="1.10.150.380">
    <property type="entry name" value="GatB domain, N-terminal subdomain"/>
    <property type="match status" value="1"/>
</dbReference>
<dbReference type="HAMAP" id="MF_00121">
    <property type="entry name" value="GatB"/>
    <property type="match status" value="1"/>
</dbReference>
<dbReference type="InterPro" id="IPR017959">
    <property type="entry name" value="Asn/Gln-tRNA_amidoTrfase_suB/E"/>
</dbReference>
<dbReference type="InterPro" id="IPR006075">
    <property type="entry name" value="Asn/Gln-tRNA_Trfase_suB/E_cat"/>
</dbReference>
<dbReference type="InterPro" id="IPR018027">
    <property type="entry name" value="Asn/Gln_amidotransferase"/>
</dbReference>
<dbReference type="InterPro" id="IPR003789">
    <property type="entry name" value="Asn/Gln_tRNA_amidoTrase-B-like"/>
</dbReference>
<dbReference type="InterPro" id="IPR004413">
    <property type="entry name" value="GatB"/>
</dbReference>
<dbReference type="InterPro" id="IPR042114">
    <property type="entry name" value="GatB_C_1"/>
</dbReference>
<dbReference type="InterPro" id="IPR023168">
    <property type="entry name" value="GatB_Yqey_C_2"/>
</dbReference>
<dbReference type="InterPro" id="IPR017958">
    <property type="entry name" value="Gln-tRNA_amidoTrfase_suB_CS"/>
</dbReference>
<dbReference type="InterPro" id="IPR014746">
    <property type="entry name" value="Gln_synth/guanido_kin_cat_dom"/>
</dbReference>
<dbReference type="NCBIfam" id="TIGR00133">
    <property type="entry name" value="gatB"/>
    <property type="match status" value="1"/>
</dbReference>
<dbReference type="NCBIfam" id="NF004012">
    <property type="entry name" value="PRK05477.1-2"/>
    <property type="match status" value="1"/>
</dbReference>
<dbReference type="NCBIfam" id="NF004014">
    <property type="entry name" value="PRK05477.1-4"/>
    <property type="match status" value="1"/>
</dbReference>
<dbReference type="PANTHER" id="PTHR11659">
    <property type="entry name" value="GLUTAMYL-TRNA GLN AMIDOTRANSFERASE SUBUNIT B MITOCHONDRIAL AND PROKARYOTIC PET112-RELATED"/>
    <property type="match status" value="1"/>
</dbReference>
<dbReference type="PANTHER" id="PTHR11659:SF0">
    <property type="entry name" value="GLUTAMYL-TRNA(GLN) AMIDOTRANSFERASE SUBUNIT B, MITOCHONDRIAL"/>
    <property type="match status" value="1"/>
</dbReference>
<dbReference type="Pfam" id="PF02934">
    <property type="entry name" value="GatB_N"/>
    <property type="match status" value="1"/>
</dbReference>
<dbReference type="Pfam" id="PF02637">
    <property type="entry name" value="GatB_Yqey"/>
    <property type="match status" value="1"/>
</dbReference>
<dbReference type="SMART" id="SM00845">
    <property type="entry name" value="GatB_Yqey"/>
    <property type="match status" value="1"/>
</dbReference>
<dbReference type="SUPFAM" id="SSF89095">
    <property type="entry name" value="GatB/YqeY motif"/>
    <property type="match status" value="1"/>
</dbReference>
<dbReference type="SUPFAM" id="SSF55931">
    <property type="entry name" value="Glutamine synthetase/guanido kinase"/>
    <property type="match status" value="1"/>
</dbReference>
<dbReference type="PROSITE" id="PS01234">
    <property type="entry name" value="GATB"/>
    <property type="match status" value="1"/>
</dbReference>
<protein>
    <recommendedName>
        <fullName evidence="1">Aspartyl/glutamyl-tRNA(Asn/Gln) amidotransferase subunit B</fullName>
        <shortName evidence="1">Asp/Glu-ADT subunit B</shortName>
        <ecNumber evidence="1">6.3.5.-</ecNumber>
    </recommendedName>
</protein>
<reference key="1">
    <citation type="journal article" date="2006" name="Proc. Natl. Acad. Sci. U.S.A.">
        <title>Genome reduction in Leptospira borgpetersenii reflects limited transmission potential.</title>
        <authorList>
            <person name="Bulach D.M."/>
            <person name="Zuerner R.L."/>
            <person name="Wilson P."/>
            <person name="Seemann T."/>
            <person name="McGrath A."/>
            <person name="Cullen P.A."/>
            <person name="Davis J."/>
            <person name="Johnson M."/>
            <person name="Kuczek E."/>
            <person name="Alt D.P."/>
            <person name="Peterson-Burch B."/>
            <person name="Coppel R.L."/>
            <person name="Rood J.I."/>
            <person name="Davies J.K."/>
            <person name="Adler B."/>
        </authorList>
    </citation>
    <scope>NUCLEOTIDE SEQUENCE [LARGE SCALE GENOMIC DNA]</scope>
    <source>
        <strain>JB197</strain>
    </source>
</reference>
<proteinExistence type="inferred from homology"/>
<keyword id="KW-0067">ATP-binding</keyword>
<keyword id="KW-0436">Ligase</keyword>
<keyword id="KW-0547">Nucleotide-binding</keyword>
<keyword id="KW-0648">Protein biosynthesis</keyword>
<name>GATB_LEPBJ</name>
<organism>
    <name type="scientific">Leptospira borgpetersenii serovar Hardjo-bovis (strain JB197)</name>
    <dbReference type="NCBI Taxonomy" id="355277"/>
    <lineage>
        <taxon>Bacteria</taxon>
        <taxon>Pseudomonadati</taxon>
        <taxon>Spirochaetota</taxon>
        <taxon>Spirochaetia</taxon>
        <taxon>Leptospirales</taxon>
        <taxon>Leptospiraceae</taxon>
        <taxon>Leptospira</taxon>
    </lineage>
</organism>